<name>IHFB_AZOSB</name>
<comment type="function">
    <text evidence="1">This protein is one of the two subunits of integration host factor, a specific DNA-binding protein that functions in genetic recombination as well as in transcriptional and translational control.</text>
</comment>
<comment type="subunit">
    <text evidence="1">Heterodimer of an alpha and a beta chain.</text>
</comment>
<comment type="similarity">
    <text evidence="1">Belongs to the bacterial histone-like protein family.</text>
</comment>
<reference key="1">
    <citation type="journal article" date="2006" name="Nat. Biotechnol.">
        <title>Complete genome of the mutualistic, N2-fixing grass endophyte Azoarcus sp. strain BH72.</title>
        <authorList>
            <person name="Krause A."/>
            <person name="Ramakumar A."/>
            <person name="Bartels D."/>
            <person name="Battistoni F."/>
            <person name="Bekel T."/>
            <person name="Boch J."/>
            <person name="Boehm M."/>
            <person name="Friedrich F."/>
            <person name="Hurek T."/>
            <person name="Krause L."/>
            <person name="Linke B."/>
            <person name="McHardy A.C."/>
            <person name="Sarkar A."/>
            <person name="Schneiker S."/>
            <person name="Syed A.A."/>
            <person name="Thauer R."/>
            <person name="Vorhoelter F.-J."/>
            <person name="Weidner S."/>
            <person name="Puehler A."/>
            <person name="Reinhold-Hurek B."/>
            <person name="Kaiser O."/>
            <person name="Goesmann A."/>
        </authorList>
    </citation>
    <scope>NUCLEOTIDE SEQUENCE [LARGE SCALE GENOMIC DNA]</scope>
    <source>
        <strain>BH72</strain>
    </source>
</reference>
<gene>
    <name evidence="1" type="primary">ihfB</name>
    <name evidence="1" type="synonym">himD</name>
    <name type="ordered locus">azo1073</name>
</gene>
<proteinExistence type="inferred from homology"/>
<feature type="chain" id="PRO_1000060585" description="Integration host factor subunit beta">
    <location>
        <begin position="1"/>
        <end position="94"/>
    </location>
</feature>
<dbReference type="EMBL" id="AM406670">
    <property type="protein sequence ID" value="CAL93690.1"/>
    <property type="molecule type" value="Genomic_DNA"/>
</dbReference>
<dbReference type="RefSeq" id="WP_011764807.1">
    <property type="nucleotide sequence ID" value="NC_008702.1"/>
</dbReference>
<dbReference type="SMR" id="A1K4D5"/>
<dbReference type="STRING" id="62928.azo1073"/>
<dbReference type="KEGG" id="aoa:dqs_1181"/>
<dbReference type="KEGG" id="azo:azo1073"/>
<dbReference type="eggNOG" id="COG0776">
    <property type="taxonomic scope" value="Bacteria"/>
</dbReference>
<dbReference type="HOGENOM" id="CLU_105066_2_0_4"/>
<dbReference type="OrthoDB" id="9804203at2"/>
<dbReference type="Proteomes" id="UP000002588">
    <property type="component" value="Chromosome"/>
</dbReference>
<dbReference type="GO" id="GO:0005694">
    <property type="term" value="C:chromosome"/>
    <property type="evidence" value="ECO:0007669"/>
    <property type="project" value="InterPro"/>
</dbReference>
<dbReference type="GO" id="GO:0005829">
    <property type="term" value="C:cytosol"/>
    <property type="evidence" value="ECO:0007669"/>
    <property type="project" value="TreeGrafter"/>
</dbReference>
<dbReference type="GO" id="GO:0003677">
    <property type="term" value="F:DNA binding"/>
    <property type="evidence" value="ECO:0007669"/>
    <property type="project" value="UniProtKB-UniRule"/>
</dbReference>
<dbReference type="GO" id="GO:0030527">
    <property type="term" value="F:structural constituent of chromatin"/>
    <property type="evidence" value="ECO:0007669"/>
    <property type="project" value="InterPro"/>
</dbReference>
<dbReference type="GO" id="GO:0006310">
    <property type="term" value="P:DNA recombination"/>
    <property type="evidence" value="ECO:0007669"/>
    <property type="project" value="UniProtKB-UniRule"/>
</dbReference>
<dbReference type="GO" id="GO:0006355">
    <property type="term" value="P:regulation of DNA-templated transcription"/>
    <property type="evidence" value="ECO:0007669"/>
    <property type="project" value="UniProtKB-UniRule"/>
</dbReference>
<dbReference type="GO" id="GO:0006417">
    <property type="term" value="P:regulation of translation"/>
    <property type="evidence" value="ECO:0007669"/>
    <property type="project" value="UniProtKB-UniRule"/>
</dbReference>
<dbReference type="CDD" id="cd13836">
    <property type="entry name" value="IHF_B"/>
    <property type="match status" value="1"/>
</dbReference>
<dbReference type="FunFam" id="4.10.520.10:FF:000003">
    <property type="entry name" value="Integration host factor subunit beta"/>
    <property type="match status" value="1"/>
</dbReference>
<dbReference type="Gene3D" id="4.10.520.10">
    <property type="entry name" value="IHF-like DNA-binding proteins"/>
    <property type="match status" value="1"/>
</dbReference>
<dbReference type="HAMAP" id="MF_00381">
    <property type="entry name" value="IHF_beta"/>
    <property type="match status" value="1"/>
</dbReference>
<dbReference type="InterPro" id="IPR000119">
    <property type="entry name" value="Hist_DNA-bd"/>
</dbReference>
<dbReference type="InterPro" id="IPR010992">
    <property type="entry name" value="IHF-like_DNA-bd_dom_sf"/>
</dbReference>
<dbReference type="InterPro" id="IPR005685">
    <property type="entry name" value="IHF_beta"/>
</dbReference>
<dbReference type="NCBIfam" id="TIGR00988">
    <property type="entry name" value="hip"/>
    <property type="match status" value="1"/>
</dbReference>
<dbReference type="NCBIfam" id="NF001222">
    <property type="entry name" value="PRK00199.1"/>
    <property type="match status" value="1"/>
</dbReference>
<dbReference type="PANTHER" id="PTHR33175">
    <property type="entry name" value="DNA-BINDING PROTEIN HU"/>
    <property type="match status" value="1"/>
</dbReference>
<dbReference type="PANTHER" id="PTHR33175:SF5">
    <property type="entry name" value="INTEGRATION HOST FACTOR SUBUNIT BETA"/>
    <property type="match status" value="1"/>
</dbReference>
<dbReference type="Pfam" id="PF00216">
    <property type="entry name" value="Bac_DNA_binding"/>
    <property type="match status" value="1"/>
</dbReference>
<dbReference type="PRINTS" id="PR01727">
    <property type="entry name" value="DNABINDINGHU"/>
</dbReference>
<dbReference type="SMART" id="SM00411">
    <property type="entry name" value="BHL"/>
    <property type="match status" value="1"/>
</dbReference>
<dbReference type="SUPFAM" id="SSF47729">
    <property type="entry name" value="IHF-like DNA-binding proteins"/>
    <property type="match status" value="1"/>
</dbReference>
<protein>
    <recommendedName>
        <fullName evidence="1">Integration host factor subunit beta</fullName>
        <shortName evidence="1">IHF-beta</shortName>
    </recommendedName>
</protein>
<sequence>MTKSELIAQLAARFPQLVAKDADYAVKMILDAMSDALARGDRIEIRGFGSFALNYRPPRVGRNPKSGEKVHVPEKYVPHFKAGKELRERVDIVE</sequence>
<organism>
    <name type="scientific">Azoarcus sp. (strain BH72)</name>
    <dbReference type="NCBI Taxonomy" id="418699"/>
    <lineage>
        <taxon>Bacteria</taxon>
        <taxon>Pseudomonadati</taxon>
        <taxon>Pseudomonadota</taxon>
        <taxon>Betaproteobacteria</taxon>
        <taxon>Rhodocyclales</taxon>
        <taxon>Zoogloeaceae</taxon>
        <taxon>Azoarcus</taxon>
    </lineage>
</organism>
<evidence type="ECO:0000255" key="1">
    <source>
        <dbReference type="HAMAP-Rule" id="MF_00381"/>
    </source>
</evidence>
<accession>A1K4D5</accession>
<keyword id="KW-0233">DNA recombination</keyword>
<keyword id="KW-0238">DNA-binding</keyword>
<keyword id="KW-1185">Reference proteome</keyword>
<keyword id="KW-0804">Transcription</keyword>
<keyword id="KW-0805">Transcription regulation</keyword>
<keyword id="KW-0810">Translation regulation</keyword>